<name>LEU3_THEMA</name>
<organism>
    <name type="scientific">Thermotoga maritima (strain ATCC 43589 / DSM 3109 / JCM 10099 / NBRC 100826 / MSB8)</name>
    <dbReference type="NCBI Taxonomy" id="243274"/>
    <lineage>
        <taxon>Bacteria</taxon>
        <taxon>Thermotogati</taxon>
        <taxon>Thermotogota</taxon>
        <taxon>Thermotogae</taxon>
        <taxon>Thermotogales</taxon>
        <taxon>Thermotogaceae</taxon>
        <taxon>Thermotoga</taxon>
    </lineage>
</organism>
<gene>
    <name type="primary">leuB</name>
    <name type="ordered locus">TM_0556</name>
</gene>
<sequence length="354" mass="39190">MKIAVLPGDGIGPEVVREALKVLEVVEKKTGKTFEKVFGHIGGDAIDRFGEPLPEETKKICLEADAIFLGSVGGPKWDDLPPEKRPEIGGLLALRKMLNLYANIRPIKVYRSLVHVSPLKEKVIGSGVDLVTVRELSYGVYYGQPRGLDEEKGFDTMIYDRKTVERIARTAFEIAKNRRKKVTSVDKANVLYSSMLWRKVVNEVAREYPDVELTHIYVDNAAMQLILKPSQFDVILTTNMFGDILSDESAALPGSLGLLPSASFGDKNLYEPAGGSAPDIAGKNIANPIAQILSLAMMLEHSFGMVEEARKIERAVELVIEEGYRTRDIAEDPEKAVSTSQMGDLICKKLEEIW</sequence>
<accession>Q9WZ26</accession>
<dbReference type="EC" id="1.1.1.85"/>
<dbReference type="EMBL" id="AE000512">
    <property type="protein sequence ID" value="AAD35641.1"/>
    <property type="molecule type" value="Genomic_DNA"/>
</dbReference>
<dbReference type="PIR" id="B72363">
    <property type="entry name" value="B72363"/>
</dbReference>
<dbReference type="RefSeq" id="NP_228366.1">
    <property type="nucleotide sequence ID" value="NC_000853.1"/>
</dbReference>
<dbReference type="RefSeq" id="WP_004081326.1">
    <property type="nucleotide sequence ID" value="NC_000853.1"/>
</dbReference>
<dbReference type="PDB" id="1VLC">
    <property type="method" value="X-ray"/>
    <property type="resolution" value="1.90 A"/>
    <property type="chains" value="A=1-354"/>
</dbReference>
<dbReference type="PDBsum" id="1VLC"/>
<dbReference type="SMR" id="Q9WZ26"/>
<dbReference type="FunCoup" id="Q9WZ26">
    <property type="interactions" value="292"/>
</dbReference>
<dbReference type="STRING" id="243274.TM_0556"/>
<dbReference type="PaxDb" id="243274-THEMA_01895"/>
<dbReference type="EnsemblBacteria" id="AAD35641">
    <property type="protein sequence ID" value="AAD35641"/>
    <property type="gene ID" value="TM_0556"/>
</dbReference>
<dbReference type="KEGG" id="tma:TM0556"/>
<dbReference type="KEGG" id="tmi:THEMA_01895"/>
<dbReference type="KEGG" id="tmm:Tmari_0553"/>
<dbReference type="KEGG" id="tmw:THMA_0569"/>
<dbReference type="eggNOG" id="COG0473">
    <property type="taxonomic scope" value="Bacteria"/>
</dbReference>
<dbReference type="InParanoid" id="Q9WZ26"/>
<dbReference type="OrthoDB" id="9806254at2"/>
<dbReference type="UniPathway" id="UPA00048">
    <property type="reaction ID" value="UER00072"/>
</dbReference>
<dbReference type="EvolutionaryTrace" id="Q9WZ26"/>
<dbReference type="Proteomes" id="UP000008183">
    <property type="component" value="Chromosome"/>
</dbReference>
<dbReference type="GO" id="GO:0005829">
    <property type="term" value="C:cytosol"/>
    <property type="evidence" value="ECO:0000318"/>
    <property type="project" value="GO_Central"/>
</dbReference>
<dbReference type="GO" id="GO:0003862">
    <property type="term" value="F:3-isopropylmalate dehydrogenase activity"/>
    <property type="evidence" value="ECO:0000318"/>
    <property type="project" value="GO_Central"/>
</dbReference>
<dbReference type="GO" id="GO:0000287">
    <property type="term" value="F:magnesium ion binding"/>
    <property type="evidence" value="ECO:0007669"/>
    <property type="project" value="InterPro"/>
</dbReference>
<dbReference type="GO" id="GO:0051287">
    <property type="term" value="F:NAD binding"/>
    <property type="evidence" value="ECO:0007669"/>
    <property type="project" value="InterPro"/>
</dbReference>
<dbReference type="GO" id="GO:0009098">
    <property type="term" value="P:L-leucine biosynthetic process"/>
    <property type="evidence" value="ECO:0000318"/>
    <property type="project" value="GO_Central"/>
</dbReference>
<dbReference type="FunFam" id="3.40.718.10:FF:000006">
    <property type="entry name" value="3-isopropylmalate dehydrogenase"/>
    <property type="match status" value="1"/>
</dbReference>
<dbReference type="Gene3D" id="3.40.718.10">
    <property type="entry name" value="Isopropylmalate Dehydrogenase"/>
    <property type="match status" value="1"/>
</dbReference>
<dbReference type="HAMAP" id="MF_01033">
    <property type="entry name" value="LeuB_type1"/>
    <property type="match status" value="1"/>
</dbReference>
<dbReference type="InterPro" id="IPR019818">
    <property type="entry name" value="IsoCit/isopropylmalate_DH_CS"/>
</dbReference>
<dbReference type="InterPro" id="IPR024084">
    <property type="entry name" value="IsoPropMal-DH-like_dom"/>
</dbReference>
<dbReference type="InterPro" id="IPR004429">
    <property type="entry name" value="Isopropylmalate_DH"/>
</dbReference>
<dbReference type="NCBIfam" id="TIGR00169">
    <property type="entry name" value="leuB"/>
    <property type="match status" value="1"/>
</dbReference>
<dbReference type="PANTHER" id="PTHR42979">
    <property type="entry name" value="3-ISOPROPYLMALATE DEHYDROGENASE"/>
    <property type="match status" value="1"/>
</dbReference>
<dbReference type="PANTHER" id="PTHR42979:SF1">
    <property type="entry name" value="3-ISOPROPYLMALATE DEHYDROGENASE"/>
    <property type="match status" value="1"/>
</dbReference>
<dbReference type="Pfam" id="PF00180">
    <property type="entry name" value="Iso_dh"/>
    <property type="match status" value="1"/>
</dbReference>
<dbReference type="SMART" id="SM01329">
    <property type="entry name" value="Iso_dh"/>
    <property type="match status" value="1"/>
</dbReference>
<dbReference type="SUPFAM" id="SSF53659">
    <property type="entry name" value="Isocitrate/Isopropylmalate dehydrogenase-like"/>
    <property type="match status" value="1"/>
</dbReference>
<dbReference type="PROSITE" id="PS00470">
    <property type="entry name" value="IDH_IMDH"/>
    <property type="match status" value="1"/>
</dbReference>
<keyword id="KW-0002">3D-structure</keyword>
<keyword id="KW-0028">Amino-acid biosynthesis</keyword>
<keyword id="KW-0100">Branched-chain amino acid biosynthesis</keyword>
<keyword id="KW-0963">Cytoplasm</keyword>
<keyword id="KW-0432">Leucine biosynthesis</keyword>
<keyword id="KW-0460">Magnesium</keyword>
<keyword id="KW-0464">Manganese</keyword>
<keyword id="KW-0479">Metal-binding</keyword>
<keyword id="KW-0520">NAD</keyword>
<keyword id="KW-0560">Oxidoreductase</keyword>
<keyword id="KW-1185">Reference proteome</keyword>
<proteinExistence type="evidence at protein level"/>
<comment type="function">
    <text>Catalyzes the oxidation of 3-carboxy-2-hydroxy-4-methylpentanoate (3-isopropylmalate) to 3-carboxy-4-methyl-2-oxopentanoate. The product decarboxylates to 4-methyl-2 oxopentanoate.</text>
</comment>
<comment type="catalytic activity">
    <reaction>
        <text>(2R,3S)-3-isopropylmalate + NAD(+) = 4-methyl-2-oxopentanoate + CO2 + NADH</text>
        <dbReference type="Rhea" id="RHEA:32271"/>
        <dbReference type="ChEBI" id="CHEBI:16526"/>
        <dbReference type="ChEBI" id="CHEBI:17865"/>
        <dbReference type="ChEBI" id="CHEBI:35121"/>
        <dbReference type="ChEBI" id="CHEBI:57540"/>
        <dbReference type="ChEBI" id="CHEBI:57945"/>
        <dbReference type="EC" id="1.1.1.85"/>
    </reaction>
</comment>
<comment type="cofactor">
    <cofactor>
        <name>Mg(2+)</name>
        <dbReference type="ChEBI" id="CHEBI:18420"/>
    </cofactor>
    <cofactor>
        <name>Mn(2+)</name>
        <dbReference type="ChEBI" id="CHEBI:29035"/>
    </cofactor>
    <text>Binds 1 Mg(2+) or Mn(2+) ion per subunit.</text>
</comment>
<comment type="pathway">
    <text>Amino-acid biosynthesis; L-leucine biosynthesis; L-leucine from 3-methyl-2-oxobutanoate: step 3/4.</text>
</comment>
<comment type="subunit">
    <text evidence="1">Homodimer.</text>
</comment>
<comment type="subcellular location">
    <subcellularLocation>
        <location>Cytoplasm</location>
    </subcellularLocation>
</comment>
<comment type="similarity">
    <text evidence="2">Belongs to the isocitrate and isopropylmalate dehydrogenases family. LeuB type 1 subfamily.</text>
</comment>
<reference key="1">
    <citation type="journal article" date="1999" name="Nature">
        <title>Evidence for lateral gene transfer between Archaea and Bacteria from genome sequence of Thermotoga maritima.</title>
        <authorList>
            <person name="Nelson K.E."/>
            <person name="Clayton R.A."/>
            <person name="Gill S.R."/>
            <person name="Gwinn M.L."/>
            <person name="Dodson R.J."/>
            <person name="Haft D.H."/>
            <person name="Hickey E.K."/>
            <person name="Peterson J.D."/>
            <person name="Nelson W.C."/>
            <person name="Ketchum K.A."/>
            <person name="McDonald L.A."/>
            <person name="Utterback T.R."/>
            <person name="Malek J.A."/>
            <person name="Linher K.D."/>
            <person name="Garrett M.M."/>
            <person name="Stewart A.M."/>
            <person name="Cotton M.D."/>
            <person name="Pratt M.S."/>
            <person name="Phillips C.A."/>
            <person name="Richardson D.L."/>
            <person name="Heidelberg J.F."/>
            <person name="Sutton G.G."/>
            <person name="Fleischmann R.D."/>
            <person name="Eisen J.A."/>
            <person name="White O."/>
            <person name="Salzberg S.L."/>
            <person name="Smith H.O."/>
            <person name="Venter J.C."/>
            <person name="Fraser C.M."/>
        </authorList>
    </citation>
    <scope>NUCLEOTIDE SEQUENCE [LARGE SCALE GENOMIC DNA]</scope>
    <source>
        <strain>ATCC 43589 / DSM 3109 / JCM 10099 / NBRC 100826 / MSB8</strain>
    </source>
</reference>
<protein>
    <recommendedName>
        <fullName>3-isopropylmalate dehydrogenase</fullName>
        <ecNumber>1.1.1.85</ecNumber>
    </recommendedName>
    <alternativeName>
        <fullName>3-IPM-DH</fullName>
    </alternativeName>
    <alternativeName>
        <fullName>Beta-IPM dehydrogenase</fullName>
        <shortName>IMDH</shortName>
    </alternativeName>
</protein>
<feature type="chain" id="PRO_0000083771" description="3-isopropylmalate dehydrogenase">
    <location>
        <begin position="1"/>
        <end position="354"/>
    </location>
</feature>
<feature type="binding site" evidence="1">
    <location>
        <begin position="74"/>
        <end position="87"/>
    </location>
    <ligand>
        <name>NAD(+)</name>
        <dbReference type="ChEBI" id="CHEBI:57540"/>
    </ligand>
</feature>
<feature type="binding site" evidence="1">
    <location>
        <position position="95"/>
    </location>
    <ligand>
        <name>substrate</name>
    </ligand>
</feature>
<feature type="binding site" evidence="1">
    <location>
        <position position="105"/>
    </location>
    <ligand>
        <name>substrate</name>
    </ligand>
</feature>
<feature type="binding site" evidence="1">
    <location>
        <position position="134"/>
    </location>
    <ligand>
        <name>substrate</name>
    </ligand>
</feature>
<feature type="binding site" evidence="1">
    <location>
        <position position="219"/>
    </location>
    <ligand>
        <name>Mg(2+)</name>
        <dbReference type="ChEBI" id="CHEBI:18420"/>
    </ligand>
</feature>
<feature type="binding site" evidence="1">
    <location>
        <position position="219"/>
    </location>
    <ligand>
        <name>substrate</name>
    </ligand>
</feature>
<feature type="binding site" evidence="1">
    <location>
        <position position="243"/>
    </location>
    <ligand>
        <name>Mg(2+)</name>
        <dbReference type="ChEBI" id="CHEBI:18420"/>
    </ligand>
</feature>
<feature type="binding site" evidence="1">
    <location>
        <position position="247"/>
    </location>
    <ligand>
        <name>Mg(2+)</name>
        <dbReference type="ChEBI" id="CHEBI:18420"/>
    </ligand>
</feature>
<feature type="binding site" evidence="1">
    <location>
        <begin position="275"/>
        <end position="287"/>
    </location>
    <ligand>
        <name>NAD(+)</name>
        <dbReference type="ChEBI" id="CHEBI:57540"/>
    </ligand>
</feature>
<feature type="site" description="Important for catalysis" evidence="1">
    <location>
        <position position="141"/>
    </location>
</feature>
<feature type="site" description="Important for catalysis" evidence="1">
    <location>
        <position position="187"/>
    </location>
</feature>
<feature type="strand" evidence="3">
    <location>
        <begin position="1"/>
        <end position="9"/>
    </location>
</feature>
<feature type="helix" evidence="3">
    <location>
        <begin position="11"/>
        <end position="30"/>
    </location>
</feature>
<feature type="strand" evidence="3">
    <location>
        <begin position="33"/>
        <end position="38"/>
    </location>
</feature>
<feature type="helix" evidence="3">
    <location>
        <begin position="43"/>
        <end position="49"/>
    </location>
</feature>
<feature type="strand" evidence="3">
    <location>
        <begin position="50"/>
        <end position="53"/>
    </location>
</feature>
<feature type="helix" evidence="3">
    <location>
        <begin position="55"/>
        <end position="63"/>
    </location>
</feature>
<feature type="strand" evidence="3">
    <location>
        <begin position="64"/>
        <end position="71"/>
    </location>
</feature>
<feature type="helix" evidence="3">
    <location>
        <begin position="75"/>
        <end position="77"/>
    </location>
</feature>
<feature type="helix" evidence="3">
    <location>
        <begin position="86"/>
        <end position="89"/>
    </location>
</feature>
<feature type="helix" evidence="3">
    <location>
        <begin position="91"/>
        <end position="97"/>
    </location>
</feature>
<feature type="strand" evidence="3">
    <location>
        <begin position="102"/>
        <end position="108"/>
    </location>
</feature>
<feature type="helix" evidence="3">
    <location>
        <begin position="111"/>
        <end position="116"/>
    </location>
</feature>
<feature type="strand" evidence="3">
    <location>
        <begin position="117"/>
        <end position="119"/>
    </location>
</feature>
<feature type="helix" evidence="3">
    <location>
        <begin position="121"/>
        <end position="124"/>
    </location>
</feature>
<feature type="strand" evidence="3">
    <location>
        <begin position="129"/>
        <end position="135"/>
    </location>
</feature>
<feature type="helix" evidence="3">
    <location>
        <begin position="139"/>
        <end position="141"/>
    </location>
</feature>
<feature type="strand" evidence="3">
    <location>
        <begin position="143"/>
        <end position="148"/>
    </location>
</feature>
<feature type="strand" evidence="3">
    <location>
        <begin position="153"/>
        <end position="156"/>
    </location>
</feature>
<feature type="helix" evidence="3">
    <location>
        <begin position="161"/>
        <end position="176"/>
    </location>
</feature>
<feature type="turn" evidence="3">
    <location>
        <begin position="177"/>
        <end position="179"/>
    </location>
</feature>
<feature type="strand" evidence="3">
    <location>
        <begin position="180"/>
        <end position="186"/>
    </location>
</feature>
<feature type="turn" evidence="3">
    <location>
        <begin position="188"/>
        <end position="190"/>
    </location>
</feature>
<feature type="helix" evidence="3">
    <location>
        <begin position="192"/>
        <end position="205"/>
    </location>
</feature>
<feature type="strand" evidence="3">
    <location>
        <begin position="211"/>
        <end position="217"/>
    </location>
</feature>
<feature type="helix" evidence="3">
    <location>
        <begin position="218"/>
        <end position="227"/>
    </location>
</feature>
<feature type="helix" evidence="3">
    <location>
        <begin position="229"/>
        <end position="231"/>
    </location>
</feature>
<feature type="strand" evidence="3">
    <location>
        <begin position="233"/>
        <end position="237"/>
    </location>
</feature>
<feature type="helix" evidence="3">
    <location>
        <begin position="239"/>
        <end position="249"/>
    </location>
</feature>
<feature type="strand" evidence="3">
    <location>
        <begin position="252"/>
        <end position="254"/>
    </location>
</feature>
<feature type="helix" evidence="3">
    <location>
        <begin position="256"/>
        <end position="258"/>
    </location>
</feature>
<feature type="strand" evidence="3">
    <location>
        <begin position="260"/>
        <end position="274"/>
    </location>
</feature>
<feature type="turn" evidence="3">
    <location>
        <begin position="278"/>
        <end position="284"/>
    </location>
</feature>
<feature type="helix" evidence="3">
    <location>
        <begin position="289"/>
        <end position="303"/>
    </location>
</feature>
<feature type="helix" evidence="3">
    <location>
        <begin position="306"/>
        <end position="321"/>
    </location>
</feature>
<feature type="helix" evidence="3">
    <location>
        <begin position="327"/>
        <end position="329"/>
    </location>
</feature>
<feature type="helix" evidence="3">
    <location>
        <begin position="333"/>
        <end position="335"/>
    </location>
</feature>
<feature type="helix" evidence="3">
    <location>
        <begin position="339"/>
        <end position="353"/>
    </location>
</feature>
<evidence type="ECO:0000250" key="1"/>
<evidence type="ECO:0000305" key="2"/>
<evidence type="ECO:0007829" key="3">
    <source>
        <dbReference type="PDB" id="1VLC"/>
    </source>
</evidence>